<dbReference type="EMBL" id="AAFI02000190">
    <property type="protein sequence ID" value="EAL61185.1"/>
    <property type="molecule type" value="Genomic_DNA"/>
</dbReference>
<dbReference type="RefSeq" id="XP_629592.1">
    <property type="nucleotide sequence ID" value="XM_629590.1"/>
</dbReference>
<dbReference type="SMR" id="Q54DA4"/>
<dbReference type="FunCoup" id="Q54DA4">
    <property type="interactions" value="34"/>
</dbReference>
<dbReference type="STRING" id="44689.Q54DA4"/>
<dbReference type="GlyGen" id="Q54DA4">
    <property type="glycosylation" value="8 sites"/>
</dbReference>
<dbReference type="PaxDb" id="44689-DDB0304394"/>
<dbReference type="EnsemblProtists" id="EAL61185">
    <property type="protein sequence ID" value="EAL61185"/>
    <property type="gene ID" value="DDB_G0292412"/>
</dbReference>
<dbReference type="GeneID" id="8628652"/>
<dbReference type="KEGG" id="ddi:DDB_G0292412"/>
<dbReference type="dictyBase" id="DDB_G0292412"/>
<dbReference type="VEuPathDB" id="AmoebaDB:DDB_G0292412"/>
<dbReference type="eggNOG" id="KOG1341">
    <property type="taxonomic scope" value="Eukaryota"/>
</dbReference>
<dbReference type="HOGENOM" id="CLU_423027_0_0_1"/>
<dbReference type="InParanoid" id="Q54DA4"/>
<dbReference type="OMA" id="VSKLVMC"/>
<dbReference type="PhylomeDB" id="Q54DA4"/>
<dbReference type="PRO" id="PR:Q54DA4"/>
<dbReference type="Proteomes" id="UP000002195">
    <property type="component" value="Chromosome 6"/>
</dbReference>
<dbReference type="GO" id="GO:0005886">
    <property type="term" value="C:plasma membrane"/>
    <property type="evidence" value="ECO:0000318"/>
    <property type="project" value="GO_Central"/>
</dbReference>
<dbReference type="GO" id="GO:0140107">
    <property type="term" value="F:high-affinity potassium ion transmembrane transporter activity"/>
    <property type="evidence" value="ECO:0000318"/>
    <property type="project" value="GO_Central"/>
</dbReference>
<dbReference type="GO" id="GO:0030007">
    <property type="term" value="P:intracellular potassium ion homeostasis"/>
    <property type="evidence" value="ECO:0000318"/>
    <property type="project" value="GO_Central"/>
</dbReference>
<dbReference type="GO" id="GO:1990573">
    <property type="term" value="P:potassium ion import across plasma membrane"/>
    <property type="evidence" value="ECO:0000318"/>
    <property type="project" value="GO_Central"/>
</dbReference>
<dbReference type="InterPro" id="IPR003445">
    <property type="entry name" value="Cat_transpt"/>
</dbReference>
<dbReference type="InterPro" id="IPR051143">
    <property type="entry name" value="TrkH_K-transport"/>
</dbReference>
<dbReference type="PANTHER" id="PTHR31064:SF30">
    <property type="entry name" value="HIGH-AFFINITY POTASSIUM TRANSPORT PROTEIN-RELATED"/>
    <property type="match status" value="1"/>
</dbReference>
<dbReference type="PANTHER" id="PTHR31064">
    <property type="entry name" value="POTASSIUM TRANSPORT PROTEIN DDB_G0292412-RELATED"/>
    <property type="match status" value="1"/>
</dbReference>
<dbReference type="Pfam" id="PF02386">
    <property type="entry name" value="TrkH"/>
    <property type="match status" value="1"/>
</dbReference>
<feature type="chain" id="PRO_0000385372" description="Putative potassium transport protein DDB_G0292412">
    <location>
        <begin position="1"/>
        <end position="648"/>
    </location>
</feature>
<feature type="transmembrane region" description="Helical" evidence="1">
    <location>
        <begin position="48"/>
        <end position="68"/>
    </location>
</feature>
<feature type="transmembrane region" description="Helical" evidence="1">
    <location>
        <begin position="313"/>
        <end position="333"/>
    </location>
</feature>
<feature type="transmembrane region" description="Helical" evidence="1">
    <location>
        <begin position="353"/>
        <end position="373"/>
    </location>
</feature>
<feature type="transmembrane region" description="Helical" evidence="1">
    <location>
        <begin position="385"/>
        <end position="405"/>
    </location>
</feature>
<feature type="transmembrane region" description="Helical" evidence="1">
    <location>
        <begin position="443"/>
        <end position="463"/>
    </location>
</feature>
<feature type="transmembrane region" description="Helical" evidence="1">
    <location>
        <begin position="472"/>
        <end position="491"/>
    </location>
</feature>
<feature type="transmembrane region" description="Helical" evidence="1">
    <location>
        <begin position="505"/>
        <end position="525"/>
    </location>
</feature>
<feature type="transmembrane region" description="Helical" evidence="1">
    <location>
        <begin position="550"/>
        <end position="570"/>
    </location>
</feature>
<feature type="transmembrane region" description="Helical" evidence="1">
    <location>
        <begin position="571"/>
        <end position="591"/>
    </location>
</feature>
<feature type="transmembrane region" description="Helical" evidence="1">
    <location>
        <begin position="592"/>
        <end position="612"/>
    </location>
</feature>
<feature type="region of interest" description="Disordered" evidence="2">
    <location>
        <begin position="106"/>
        <end position="145"/>
    </location>
</feature>
<feature type="region of interest" description="Disordered" evidence="2">
    <location>
        <begin position="223"/>
        <end position="261"/>
    </location>
</feature>
<feature type="coiled-coil region" evidence="1">
    <location>
        <begin position="199"/>
        <end position="227"/>
    </location>
</feature>
<feature type="compositionally biased region" description="Acidic residues" evidence="2">
    <location>
        <begin position="110"/>
        <end position="129"/>
    </location>
</feature>
<feature type="glycosylation site" description="N-linked (GlcNAc...) asparagine" evidence="1">
    <location>
        <position position="81"/>
    </location>
</feature>
<feature type="glycosylation site" description="N-linked (GlcNAc...) asparagine" evidence="1">
    <location>
        <position position="239"/>
    </location>
</feature>
<feature type="glycosylation site" description="N-linked (GlcNAc...) asparagine" evidence="1">
    <location>
        <position position="243"/>
    </location>
</feature>
<feature type="glycosylation site" description="N-linked (GlcNAc...) asparagine" evidence="1">
    <location>
        <position position="247"/>
    </location>
</feature>
<feature type="glycosylation site" description="N-linked (GlcNAc...) asparagine" evidence="1">
    <location>
        <position position="248"/>
    </location>
</feature>
<feature type="glycosylation site" description="N-linked (GlcNAc...) asparagine" evidence="1">
    <location>
        <position position="254"/>
    </location>
</feature>
<feature type="glycosylation site" description="N-linked (GlcNAc...) asparagine" evidence="1">
    <location>
        <position position="257"/>
    </location>
</feature>
<feature type="glycosylation site" description="N-linked (GlcNAc...) asparagine" evidence="1">
    <location>
        <position position="536"/>
    </location>
</feature>
<reference key="1">
    <citation type="journal article" date="2005" name="Nature">
        <title>The genome of the social amoeba Dictyostelium discoideum.</title>
        <authorList>
            <person name="Eichinger L."/>
            <person name="Pachebat J.A."/>
            <person name="Gloeckner G."/>
            <person name="Rajandream M.A."/>
            <person name="Sucgang R."/>
            <person name="Berriman M."/>
            <person name="Song J."/>
            <person name="Olsen R."/>
            <person name="Szafranski K."/>
            <person name="Xu Q."/>
            <person name="Tunggal B."/>
            <person name="Kummerfeld S."/>
            <person name="Madera M."/>
            <person name="Konfortov B.A."/>
            <person name="Rivero F."/>
            <person name="Bankier A.T."/>
            <person name="Lehmann R."/>
            <person name="Hamlin N."/>
            <person name="Davies R."/>
            <person name="Gaudet P."/>
            <person name="Fey P."/>
            <person name="Pilcher K."/>
            <person name="Chen G."/>
            <person name="Saunders D."/>
            <person name="Sodergren E.J."/>
            <person name="Davis P."/>
            <person name="Kerhornou A."/>
            <person name="Nie X."/>
            <person name="Hall N."/>
            <person name="Anjard C."/>
            <person name="Hemphill L."/>
            <person name="Bason N."/>
            <person name="Farbrother P."/>
            <person name="Desany B."/>
            <person name="Just E."/>
            <person name="Morio T."/>
            <person name="Rost R."/>
            <person name="Churcher C.M."/>
            <person name="Cooper J."/>
            <person name="Haydock S."/>
            <person name="van Driessche N."/>
            <person name="Cronin A."/>
            <person name="Goodhead I."/>
            <person name="Muzny D.M."/>
            <person name="Mourier T."/>
            <person name="Pain A."/>
            <person name="Lu M."/>
            <person name="Harper D."/>
            <person name="Lindsay R."/>
            <person name="Hauser H."/>
            <person name="James K.D."/>
            <person name="Quiles M."/>
            <person name="Madan Babu M."/>
            <person name="Saito T."/>
            <person name="Buchrieser C."/>
            <person name="Wardroper A."/>
            <person name="Felder M."/>
            <person name="Thangavelu M."/>
            <person name="Johnson D."/>
            <person name="Knights A."/>
            <person name="Loulseged H."/>
            <person name="Mungall K.L."/>
            <person name="Oliver K."/>
            <person name="Price C."/>
            <person name="Quail M.A."/>
            <person name="Urushihara H."/>
            <person name="Hernandez J."/>
            <person name="Rabbinowitsch E."/>
            <person name="Steffen D."/>
            <person name="Sanders M."/>
            <person name="Ma J."/>
            <person name="Kohara Y."/>
            <person name="Sharp S."/>
            <person name="Simmonds M.N."/>
            <person name="Spiegler S."/>
            <person name="Tivey A."/>
            <person name="Sugano S."/>
            <person name="White B."/>
            <person name="Walker D."/>
            <person name="Woodward J.R."/>
            <person name="Winckler T."/>
            <person name="Tanaka Y."/>
            <person name="Shaulsky G."/>
            <person name="Schleicher M."/>
            <person name="Weinstock G.M."/>
            <person name="Rosenthal A."/>
            <person name="Cox E.C."/>
            <person name="Chisholm R.L."/>
            <person name="Gibbs R.A."/>
            <person name="Loomis W.F."/>
            <person name="Platzer M."/>
            <person name="Kay R.R."/>
            <person name="Williams J.G."/>
            <person name="Dear P.H."/>
            <person name="Noegel A.A."/>
            <person name="Barrell B.G."/>
            <person name="Kuspa A."/>
        </authorList>
    </citation>
    <scope>NUCLEOTIDE SEQUENCE [LARGE SCALE GENOMIC DNA]</scope>
    <source>
        <strain>AX4</strain>
    </source>
</reference>
<reference key="2">
    <citation type="journal article" date="2008" name="BMC Genomics">
        <title>Genome-wide transcriptional changes induced by phagocytosis or growth on bacteria in Dictyostelium.</title>
        <authorList>
            <person name="Sillo A."/>
            <person name="Bloomfield G."/>
            <person name="Balest A."/>
            <person name="Balbo A."/>
            <person name="Pergolizzi B."/>
            <person name="Peracino B."/>
            <person name="Skelton J."/>
            <person name="Ivens A."/>
            <person name="Bozzaro S."/>
        </authorList>
    </citation>
    <scope>INDUCTION [LARGE SCALE ANALYSIS]</scope>
</reference>
<keyword id="KW-0175">Coiled coil</keyword>
<keyword id="KW-0325">Glycoprotein</keyword>
<keyword id="KW-0406">Ion transport</keyword>
<keyword id="KW-0472">Membrane</keyword>
<keyword id="KW-0630">Potassium</keyword>
<keyword id="KW-0633">Potassium transport</keyword>
<keyword id="KW-1185">Reference proteome</keyword>
<keyword id="KW-0812">Transmembrane</keyword>
<keyword id="KW-1133">Transmembrane helix</keyword>
<keyword id="KW-0813">Transport</keyword>
<organism>
    <name type="scientific">Dictyostelium discoideum</name>
    <name type="common">Social amoeba</name>
    <dbReference type="NCBI Taxonomy" id="44689"/>
    <lineage>
        <taxon>Eukaryota</taxon>
        <taxon>Amoebozoa</taxon>
        <taxon>Evosea</taxon>
        <taxon>Eumycetozoa</taxon>
        <taxon>Dictyostelia</taxon>
        <taxon>Dictyosteliales</taxon>
        <taxon>Dictyosteliaceae</taxon>
        <taxon>Dictyostelium</taxon>
    </lineage>
</organism>
<protein>
    <recommendedName>
        <fullName>Putative potassium transport protein DDB_G0292412</fullName>
    </recommendedName>
</protein>
<sequence>MVGFIGSVLIKLIEFEVPFIDCLYIGYSALTTTGLVTVDISGWSSGTLFLLVILVQLGSTVLLTLPIVLLRRFFIRSVYSNSSIISAANASPDLISTIIHSHLPHHDFKDDDDENDNNNNEENDDNDDESYQHNNNNNEEHDDNDIEIGGILKLDSPIDHNLPNGFQDDNAPHHYNIPIVGKIDKKSRKFSLDSPSSPIIQQQQQQQQQQQQQQQQQQQQQQQQQQQPSTTTTTTTTTNSTLNKSTNNSTNNNNNTNDSQSIQKEVNIDINRIDSLQELQEQQEHQQQQRQLSKPLNLNSYEDNMEYRSLGKLLVIIPCYIITIYILGFISIGAYIAGSESARSIMKANGVNGWWWSLFHTFSAFNNAGLALFSDSLIQINEKYFLLITLSILIFLGNTLFPVFLRIILLVVSKFTKDPEPYRNLLENPRSIFTHLFPYKETVQLFVIWCIFNVSQIALMALLDVNDKAFTNMNYGTILLNYYFSSISTRTCGFNSVDLNLLSESVLLLFVGLMFVSSYPFIISLRRSAVNNKYSNQSREVMKEVLIRDIFVPYICILFIAIFESQLLESGVITVFQILFEAISAFGNVGLSISITLSTYSKLVFIALMLAGKHRQLPESVDESVNPALLKKNAVISKIITRYKRRKL</sequence>
<evidence type="ECO:0000255" key="1"/>
<evidence type="ECO:0000256" key="2">
    <source>
        <dbReference type="SAM" id="MobiDB-lite"/>
    </source>
</evidence>
<evidence type="ECO:0000269" key="3">
    <source>
    </source>
</evidence>
<evidence type="ECO:0000305" key="4"/>
<name>Y2412_DICDI</name>
<comment type="function">
    <text>May function as a potassium transporter.</text>
</comment>
<comment type="subcellular location">
    <subcellularLocation>
        <location evidence="4">Membrane</location>
        <topology evidence="4">Multi-pass membrane protein</topology>
    </subcellularLocation>
</comment>
<comment type="induction">
    <text evidence="3">Up-regulated by phagocytic stimuli.</text>
</comment>
<comment type="similarity">
    <text evidence="4">Belongs to the TrkH potassium transport family.</text>
</comment>
<gene>
    <name type="ORF">DDB_G0292412</name>
</gene>
<accession>Q54DA4</accession>
<proteinExistence type="evidence at transcript level"/>